<gene>
    <name type="primary">Hnrnpa1</name>
    <name type="synonym">Hnrpa1</name>
</gene>
<sequence>MSKSESPKEPEQLRKLFIGGLSFETTDESLRSHFEQWGTLTDCVVMRDPNTKRSRGFGFVTYATVEEVDAAMNARPHKVDGRVVEPKRAVSREDSQRPGAHLTVKKIFVGGIKEDTEEHHLRDYFEQYGKIEVIEIMTDRGSGKKRGFAFVTFDDHDSVDKIVIQKYHTVNGHNCEVRKALCKQEMASASSSQRGRSGSGNFGGGRGGGFGGNDNFGRGGNFSGRGGFGGSRGGGGYGGSGDGYNGFGNDGSNFGGGGSYNDFGNYNNQSSNFGPMKGGNFGGRSSGPYGGGGQYFAKPRNQGGYGGSSSSSSYGSGRRF</sequence>
<dbReference type="EMBL" id="M12156">
    <property type="protein sequence ID" value="AAA41314.1"/>
    <property type="molecule type" value="mRNA"/>
</dbReference>
<dbReference type="PIR" id="A38304">
    <property type="entry name" value="A38304"/>
</dbReference>
<dbReference type="RefSeq" id="NP_058944.1">
    <property type="nucleotide sequence ID" value="NM_017248.1"/>
</dbReference>
<dbReference type="BMRB" id="P04256"/>
<dbReference type="SMR" id="P04256"/>
<dbReference type="BioGRID" id="248211">
    <property type="interactions" value="6"/>
</dbReference>
<dbReference type="FunCoup" id="P04256">
    <property type="interactions" value="2006"/>
</dbReference>
<dbReference type="IntAct" id="P04256">
    <property type="interactions" value="2"/>
</dbReference>
<dbReference type="STRING" id="10116.ENSRNOP00000052160"/>
<dbReference type="GlyGen" id="P04256">
    <property type="glycosylation" value="1 site, 1 O-linked glycan (1 site)"/>
</dbReference>
<dbReference type="iPTMnet" id="P04256"/>
<dbReference type="PhosphoSitePlus" id="P04256"/>
<dbReference type="SwissPalm" id="P04256"/>
<dbReference type="jPOST" id="P04256"/>
<dbReference type="PaxDb" id="10116-ENSRNOP00000052160"/>
<dbReference type="GeneID" id="29578"/>
<dbReference type="KEGG" id="rno:29578"/>
<dbReference type="UCSC" id="RGD:69234">
    <property type="organism name" value="rat"/>
</dbReference>
<dbReference type="AGR" id="RGD:69234"/>
<dbReference type="CTD" id="3178"/>
<dbReference type="RGD" id="69234">
    <property type="gene designation" value="Hnrnpa1"/>
</dbReference>
<dbReference type="eggNOG" id="KOG0118">
    <property type="taxonomic scope" value="Eukaryota"/>
</dbReference>
<dbReference type="InParanoid" id="P04256"/>
<dbReference type="PhylomeDB" id="P04256"/>
<dbReference type="Reactome" id="R-RNO-6803529">
    <property type="pathway name" value="FGFR2 alternative splicing"/>
</dbReference>
<dbReference type="Reactome" id="R-RNO-72163">
    <property type="pathway name" value="mRNA Splicing - Major Pathway"/>
</dbReference>
<dbReference type="Reactome" id="R-RNO-72203">
    <property type="pathway name" value="Processing of Capped Intron-Containing Pre-mRNA"/>
</dbReference>
<dbReference type="PRO" id="PR:P04256"/>
<dbReference type="Proteomes" id="UP000002494">
    <property type="component" value="Unplaced"/>
</dbReference>
<dbReference type="GO" id="GO:0071013">
    <property type="term" value="C:catalytic step 2 spliceosome"/>
    <property type="evidence" value="ECO:0000266"/>
    <property type="project" value="RGD"/>
</dbReference>
<dbReference type="GO" id="GO:0005737">
    <property type="term" value="C:cytoplasm"/>
    <property type="evidence" value="ECO:0000250"/>
    <property type="project" value="HGNC-UCL"/>
</dbReference>
<dbReference type="GO" id="GO:0005654">
    <property type="term" value="C:nucleoplasm"/>
    <property type="evidence" value="ECO:0000250"/>
    <property type="project" value="HGNC-UCL"/>
</dbReference>
<dbReference type="GO" id="GO:1990826">
    <property type="term" value="C:nucleoplasmic periphery of the nuclear pore complex"/>
    <property type="evidence" value="ECO:0000314"/>
    <property type="project" value="RGD"/>
</dbReference>
<dbReference type="GO" id="GO:0005634">
    <property type="term" value="C:nucleus"/>
    <property type="evidence" value="ECO:0000266"/>
    <property type="project" value="RGD"/>
</dbReference>
<dbReference type="GO" id="GO:1990904">
    <property type="term" value="C:ribonucleoprotein complex"/>
    <property type="evidence" value="ECO:0000250"/>
    <property type="project" value="UniProtKB"/>
</dbReference>
<dbReference type="GO" id="GO:0005681">
    <property type="term" value="C:spliceosomal complex"/>
    <property type="evidence" value="ECO:0000250"/>
    <property type="project" value="HGNC-UCL"/>
</dbReference>
<dbReference type="GO" id="GO:0045202">
    <property type="term" value="C:synapse"/>
    <property type="evidence" value="ECO:0000266"/>
    <property type="project" value="RGD"/>
</dbReference>
<dbReference type="GO" id="GO:0003677">
    <property type="term" value="F:DNA binding"/>
    <property type="evidence" value="ECO:0000266"/>
    <property type="project" value="RGD"/>
</dbReference>
<dbReference type="GO" id="GO:1990814">
    <property type="term" value="F:DNA/DNA annealing activity"/>
    <property type="evidence" value="ECO:0000314"/>
    <property type="project" value="RGD"/>
</dbReference>
<dbReference type="GO" id="GO:0098505">
    <property type="term" value="F:G-rich strand telomeric DNA binding"/>
    <property type="evidence" value="ECO:0000266"/>
    <property type="project" value="RGD"/>
</dbReference>
<dbReference type="GO" id="GO:0035198">
    <property type="term" value="F:miRNA binding"/>
    <property type="evidence" value="ECO:0000250"/>
    <property type="project" value="UniProtKB"/>
</dbReference>
<dbReference type="GO" id="GO:0003730">
    <property type="term" value="F:mRNA 3'-UTR binding"/>
    <property type="evidence" value="ECO:0000314"/>
    <property type="project" value="RGD"/>
</dbReference>
<dbReference type="GO" id="GO:0003729">
    <property type="term" value="F:mRNA binding"/>
    <property type="evidence" value="ECO:0000314"/>
    <property type="project" value="RGD"/>
</dbReference>
<dbReference type="GO" id="GO:0036002">
    <property type="term" value="F:pre-mRNA binding"/>
    <property type="evidence" value="ECO:0000266"/>
    <property type="project" value="RGD"/>
</dbReference>
<dbReference type="GO" id="GO:0019904">
    <property type="term" value="F:protein domain specific binding"/>
    <property type="evidence" value="ECO:0000266"/>
    <property type="project" value="RGD"/>
</dbReference>
<dbReference type="GO" id="GO:0003723">
    <property type="term" value="F:RNA binding"/>
    <property type="evidence" value="ECO:0000314"/>
    <property type="project" value="RGD"/>
</dbReference>
<dbReference type="GO" id="GO:0033592">
    <property type="term" value="F:RNA strand annealing activity"/>
    <property type="evidence" value="ECO:0000314"/>
    <property type="project" value="RGD"/>
</dbReference>
<dbReference type="GO" id="GO:1990825">
    <property type="term" value="F:sequence-specific mRNA binding"/>
    <property type="evidence" value="ECO:0000314"/>
    <property type="project" value="RGD"/>
</dbReference>
<dbReference type="GO" id="GO:0003697">
    <property type="term" value="F:single-stranded DNA binding"/>
    <property type="evidence" value="ECO:0000250"/>
    <property type="project" value="HGNC-UCL"/>
</dbReference>
<dbReference type="GO" id="GO:0003727">
    <property type="term" value="F:single-stranded RNA binding"/>
    <property type="evidence" value="ECO:0000314"/>
    <property type="project" value="RGD"/>
</dbReference>
<dbReference type="GO" id="GO:0061752">
    <property type="term" value="F:telomeric repeat-containing RNA binding"/>
    <property type="evidence" value="ECO:0000266"/>
    <property type="project" value="RGD"/>
</dbReference>
<dbReference type="GO" id="GO:0000380">
    <property type="term" value="P:alternative mRNA splicing, via spliceosome"/>
    <property type="evidence" value="ECO:0000266"/>
    <property type="project" value="RGD"/>
</dbReference>
<dbReference type="GO" id="GO:0071364">
    <property type="term" value="P:cellular response to epidermal growth factor stimulus"/>
    <property type="evidence" value="ECO:0000270"/>
    <property type="project" value="RGD"/>
</dbReference>
<dbReference type="GO" id="GO:0042149">
    <property type="term" value="P:cellular response to glucose starvation"/>
    <property type="evidence" value="ECO:0000266"/>
    <property type="project" value="RGD"/>
</dbReference>
<dbReference type="GO" id="GO:0035865">
    <property type="term" value="P:cellular response to potassium ion"/>
    <property type="evidence" value="ECO:0000314"/>
    <property type="project" value="RGD"/>
</dbReference>
<dbReference type="GO" id="GO:1903936">
    <property type="term" value="P:cellular response to sodium arsenite"/>
    <property type="evidence" value="ECO:0000250"/>
    <property type="project" value="UniProtKB"/>
</dbReference>
<dbReference type="GO" id="GO:0051170">
    <property type="term" value="P:import into nucleus"/>
    <property type="evidence" value="ECO:0000250"/>
    <property type="project" value="HGNC-UCL"/>
</dbReference>
<dbReference type="GO" id="GO:0030324">
    <property type="term" value="P:lung development"/>
    <property type="evidence" value="ECO:0000270"/>
    <property type="project" value="RGD"/>
</dbReference>
<dbReference type="GO" id="GO:0008584">
    <property type="term" value="P:male gonad development"/>
    <property type="evidence" value="ECO:0000270"/>
    <property type="project" value="RGD"/>
</dbReference>
<dbReference type="GO" id="GO:0000398">
    <property type="term" value="P:mRNA splicing, via spliceosome"/>
    <property type="evidence" value="ECO:0000318"/>
    <property type="project" value="GO_Central"/>
</dbReference>
<dbReference type="GO" id="GO:0051028">
    <property type="term" value="P:mRNA transport"/>
    <property type="evidence" value="ECO:0007669"/>
    <property type="project" value="UniProtKB-KW"/>
</dbReference>
<dbReference type="GO" id="GO:0032211">
    <property type="term" value="P:negative regulation of telomere maintenance via telomerase"/>
    <property type="evidence" value="ECO:0000266"/>
    <property type="project" value="RGD"/>
</dbReference>
<dbReference type="GO" id="GO:0051168">
    <property type="term" value="P:nuclear export"/>
    <property type="evidence" value="ECO:0000250"/>
    <property type="project" value="HGNC-UCL"/>
</dbReference>
<dbReference type="GO" id="GO:0045760">
    <property type="term" value="P:positive regulation of action potential"/>
    <property type="evidence" value="ECO:0000315"/>
    <property type="project" value="RGD"/>
</dbReference>
<dbReference type="GO" id="GO:0010628">
    <property type="term" value="P:positive regulation of gene expression"/>
    <property type="evidence" value="ECO:0000315"/>
    <property type="project" value="RGD"/>
</dbReference>
<dbReference type="GO" id="GO:0032212">
    <property type="term" value="P:positive regulation of telomere maintenance via telomerase"/>
    <property type="evidence" value="ECO:0000266"/>
    <property type="project" value="RGD"/>
</dbReference>
<dbReference type="GO" id="GO:0000381">
    <property type="term" value="P:regulation of alternative mRNA splicing, via spliceosome"/>
    <property type="evidence" value="ECO:0000266"/>
    <property type="project" value="RGD"/>
</dbReference>
<dbReference type="GO" id="GO:0043484">
    <property type="term" value="P:regulation of RNA splicing"/>
    <property type="evidence" value="ECO:0000266"/>
    <property type="project" value="RGD"/>
</dbReference>
<dbReference type="GO" id="GO:0034976">
    <property type="term" value="P:response to endoplasmic reticulum stress"/>
    <property type="evidence" value="ECO:0000270"/>
    <property type="project" value="RGD"/>
</dbReference>
<dbReference type="GO" id="GO:0016070">
    <property type="term" value="P:RNA metabolic process"/>
    <property type="evidence" value="ECO:0000304"/>
    <property type="project" value="RGD"/>
</dbReference>
<dbReference type="GO" id="GO:0008380">
    <property type="term" value="P:RNA splicing"/>
    <property type="evidence" value="ECO:0000266"/>
    <property type="project" value="RGD"/>
</dbReference>
<dbReference type="CDD" id="cd12761">
    <property type="entry name" value="RRM1_hnRNPA1"/>
    <property type="match status" value="1"/>
</dbReference>
<dbReference type="FunFam" id="3.30.70.330:FF:000048">
    <property type="entry name" value="Heterogeneous nuclear ribonucleoprotein a1 isoform"/>
    <property type="match status" value="1"/>
</dbReference>
<dbReference type="FunFam" id="3.30.70.330:FF:000429">
    <property type="entry name" value="Heterogeneous nuclear ribonucleoprotein A1-like 2"/>
    <property type="match status" value="1"/>
</dbReference>
<dbReference type="Gene3D" id="3.30.70.330">
    <property type="match status" value="2"/>
</dbReference>
<dbReference type="InterPro" id="IPR021662">
    <property type="entry name" value="HnRNPA1/A2_C"/>
</dbReference>
<dbReference type="InterPro" id="IPR034845">
    <property type="entry name" value="hnRNPA1_RRM1"/>
</dbReference>
<dbReference type="InterPro" id="IPR012677">
    <property type="entry name" value="Nucleotide-bd_a/b_plait_sf"/>
</dbReference>
<dbReference type="InterPro" id="IPR035979">
    <property type="entry name" value="RBD_domain_sf"/>
</dbReference>
<dbReference type="InterPro" id="IPR000504">
    <property type="entry name" value="RRM_dom"/>
</dbReference>
<dbReference type="PANTHER" id="PTHR48026:SF2">
    <property type="entry name" value="HETEROGENEOUS NUCLEAR RIBONUCLEOPROTEIN A1-RELATED"/>
    <property type="match status" value="1"/>
</dbReference>
<dbReference type="PANTHER" id="PTHR48026">
    <property type="entry name" value="HOMOLOGOUS TO DROSOPHILA SQD (SQUID) PROTEIN"/>
    <property type="match status" value="1"/>
</dbReference>
<dbReference type="Pfam" id="PF11627">
    <property type="entry name" value="HnRNPA1_LC"/>
    <property type="match status" value="1"/>
</dbReference>
<dbReference type="Pfam" id="PF00076">
    <property type="entry name" value="RRM_1"/>
    <property type="match status" value="2"/>
</dbReference>
<dbReference type="SMART" id="SM00360">
    <property type="entry name" value="RRM"/>
    <property type="match status" value="2"/>
</dbReference>
<dbReference type="SUPFAM" id="SSF54928">
    <property type="entry name" value="RNA-binding domain, RBD"/>
    <property type="match status" value="2"/>
</dbReference>
<dbReference type="PROSITE" id="PS50102">
    <property type="entry name" value="RRM"/>
    <property type="match status" value="2"/>
</dbReference>
<name>ROA1_RAT</name>
<reference key="1">
    <citation type="journal article" date="1986" name="J. Biol. Chem.">
        <title>Structure of rodent helix-destabilizing protein revealed by cDNA cloning.</title>
        <authorList>
            <person name="Cobianchi F."/>
            <person name="Sengupta D.N."/>
            <person name="Zmudzka B.Z."/>
            <person name="Wilson S.H."/>
        </authorList>
    </citation>
    <scope>NUCLEOTIDE SEQUENCE [MRNA]</scope>
    <source>
        <tissue>Brain</tissue>
    </source>
</reference>
<reference key="2">
    <citation type="submission" date="1986-05" db="EMBL/GenBank/DDBJ databases">
        <authorList>
            <person name="Cobianchi F."/>
        </authorList>
    </citation>
    <scope>SEQUENCE REVISION TO 182</scope>
</reference>
<reference key="3">
    <citation type="journal article" date="1988" name="J. Biol. Chem.">
        <title>Mammalian heterogeneous nuclear ribonucleoprotein complex protein A1. Large-scale overproduction in Escherichia coli and cooperative binding to single-stranded nucleic acids.</title>
        <authorList>
            <person name="Cobianchi F."/>
            <person name="Karpel R.L."/>
            <person name="Williams K.R."/>
            <person name="Notario V."/>
            <person name="Wilson S.H."/>
        </authorList>
    </citation>
    <scope>PARTIAL PROTEIN SEQUENCE</scope>
</reference>
<reference key="4">
    <citation type="submission" date="2006-11" db="UniProtKB">
        <authorList>
            <person name="Lubec G."/>
            <person name="Diao W."/>
        </authorList>
    </citation>
    <scope>PROTEIN SEQUENCE OF 16-31</scope>
    <scope>IDENTIFICATION BY MASS SPECTROMETRY</scope>
    <source>
        <strain>Sprague-Dawley</strain>
        <tissue>Hippocampus</tissue>
    </source>
</reference>
<reference key="5">
    <citation type="journal article" date="2013" name="PLoS ONE">
        <title>Arginine methylation of hnRNP A2 does not directly govern its subcellular localization.</title>
        <authorList>
            <person name="Friend L.R."/>
            <person name="Landsberg M.J."/>
            <person name="Nouwens A.S."/>
            <person name="Wei Y."/>
            <person name="Rothnagel J.A."/>
            <person name="Smith R."/>
        </authorList>
    </citation>
    <scope>METHYLATION AT ARG-194; ARG-206; ARG-218; ARG-225 AND ARG-232</scope>
</reference>
<protein>
    <recommendedName>
        <fullName>Heterogeneous nuclear ribonucleoprotein A1</fullName>
        <shortName>hnRNP A1</shortName>
    </recommendedName>
    <alternativeName>
        <fullName>Helix-destabilizing protein</fullName>
        <shortName>HDP</shortName>
    </alternativeName>
    <alternativeName>
        <fullName>Single-strand RNA-binding protein</fullName>
    </alternativeName>
    <alternativeName>
        <fullName>hnRNP core protein A1</fullName>
    </alternativeName>
    <component>
        <recommendedName>
            <fullName>Heterogeneous nuclear ribonucleoprotein A1, N-terminally processed</fullName>
        </recommendedName>
    </component>
</protein>
<proteinExistence type="evidence at protein level"/>
<comment type="function">
    <text evidence="2">Involved in the packaging of pre-mRNA into hnRNP particles, transport of poly(A) mRNA from the nucleus to the cytoplasm and modulation of splice site selection. Plays a role in the splicing of pyruvate kinase PKM by binding repressively to sequences flanking PKM exon 9, inhibiting exon 9 inclusion and resulting in exon 10 inclusion and production of the PKM M2 isoform. Binds to the IRES and thereby inhibits the translation of the apoptosis protease activating factor APAF1. May bind to specific miRNA hairpins.</text>
</comment>
<comment type="subunit">
    <text evidence="2">Identified in the spliceosome C complex. Identified in a IGF2BP1-dependent mRNP granule complex containing untranslated mRNAs. Interacts with SEPT6. Interacts with C9orf72. Interacts with KHDRBS1. Interacts with UBQLN2 (By similarity). Interacts with PPIA/CYPA (By similarity).</text>
</comment>
<comment type="subcellular location">
    <subcellularLocation>
        <location evidence="2">Nucleus</location>
    </subcellularLocation>
    <subcellularLocation>
        <location evidence="2">Cytoplasm</location>
    </subcellularLocation>
    <text evidence="2">Localized in cytoplasmic mRNP granules containing untranslated mRNAs. Shuttles continuously between the nucleus and the cytoplasm along with mRNA. Component of ribonucleosomes.</text>
</comment>
<comment type="PTM">
    <text evidence="1">Sumoylated.</text>
</comment>
<organism>
    <name type="scientific">Rattus norvegicus</name>
    <name type="common">Rat</name>
    <dbReference type="NCBI Taxonomy" id="10116"/>
    <lineage>
        <taxon>Eukaryota</taxon>
        <taxon>Metazoa</taxon>
        <taxon>Chordata</taxon>
        <taxon>Craniata</taxon>
        <taxon>Vertebrata</taxon>
        <taxon>Euteleostomi</taxon>
        <taxon>Mammalia</taxon>
        <taxon>Eutheria</taxon>
        <taxon>Euarchontoglires</taxon>
        <taxon>Glires</taxon>
        <taxon>Rodentia</taxon>
        <taxon>Myomorpha</taxon>
        <taxon>Muroidea</taxon>
        <taxon>Muridae</taxon>
        <taxon>Murinae</taxon>
        <taxon>Rattus</taxon>
    </lineage>
</organism>
<accession>P04256</accession>
<feature type="chain" id="PRO_0000424513" description="Heterogeneous nuclear ribonucleoprotein A1">
    <location>
        <begin position="1"/>
        <end position="320"/>
    </location>
</feature>
<feature type="initiator methionine" description="Removed; alternate" evidence="2">
    <location>
        <position position="1"/>
    </location>
</feature>
<feature type="chain" id="PRO_0000081831" description="Heterogeneous nuclear ribonucleoprotein A1, N-terminally processed">
    <location>
        <begin position="2"/>
        <end position="320"/>
    </location>
</feature>
<feature type="domain" description="RRM 1" evidence="4">
    <location>
        <begin position="14"/>
        <end position="97"/>
    </location>
</feature>
<feature type="domain" description="RRM 2" evidence="4">
    <location>
        <begin position="105"/>
        <end position="184"/>
    </location>
</feature>
<feature type="region of interest" description="Globular A domain">
    <location>
        <begin position="4"/>
        <end position="94"/>
    </location>
</feature>
<feature type="region of interest" description="Globular B domain">
    <location>
        <begin position="95"/>
        <end position="185"/>
    </location>
</feature>
<feature type="region of interest" description="Disordered" evidence="5">
    <location>
        <begin position="188"/>
        <end position="216"/>
    </location>
</feature>
<feature type="region of interest" description="RNA-binding RGG-box">
    <location>
        <begin position="218"/>
        <end position="240"/>
    </location>
</feature>
<feature type="region of interest" description="Nuclear targeting sequence" evidence="1">
    <location>
        <begin position="268"/>
        <end position="305"/>
    </location>
</feature>
<feature type="region of interest" description="Disordered" evidence="5">
    <location>
        <begin position="271"/>
        <end position="320"/>
    </location>
</feature>
<feature type="compositionally biased region" description="Gly residues" evidence="5">
    <location>
        <begin position="197"/>
        <end position="216"/>
    </location>
</feature>
<feature type="compositionally biased region" description="Gly residues" evidence="5">
    <location>
        <begin position="276"/>
        <end position="294"/>
    </location>
</feature>
<feature type="compositionally biased region" description="Low complexity" evidence="5">
    <location>
        <begin position="308"/>
        <end position="320"/>
    </location>
</feature>
<feature type="modified residue" description="N-acetylmethionine" evidence="2">
    <location>
        <position position="1"/>
    </location>
</feature>
<feature type="modified residue" description="N-acetylserine; in Heterogeneous nuclear ribonucleoprotein A1, N-terminally processed" evidence="2">
    <location>
        <position position="2"/>
    </location>
</feature>
<feature type="modified residue" description="Phosphoserine" evidence="2">
    <location>
        <position position="2"/>
    </location>
</feature>
<feature type="modified residue" description="N6-acetyllysine; alternate" evidence="2">
    <location>
        <position position="3"/>
    </location>
</feature>
<feature type="modified residue" description="Phosphoserine" evidence="2">
    <location>
        <position position="4"/>
    </location>
</feature>
<feature type="modified residue" description="Phosphoserine" evidence="2">
    <location>
        <position position="6"/>
    </location>
</feature>
<feature type="modified residue" description="Phosphoserine" evidence="3">
    <location>
        <position position="22"/>
    </location>
</feature>
<feature type="modified residue" description="Phosphoserine; by MKNK2" evidence="2">
    <location>
        <position position="192"/>
    </location>
</feature>
<feature type="modified residue" description="Asymmetric dimethylarginine; alternate" evidence="6">
    <location>
        <position position="194"/>
    </location>
</feature>
<feature type="modified residue" description="Dimethylated arginine; alternate" evidence="2">
    <location>
        <position position="194"/>
    </location>
</feature>
<feature type="modified residue" description="Omega-N-methylarginine; alternate" evidence="3">
    <location>
        <position position="194"/>
    </location>
</feature>
<feature type="modified residue" description="Phosphoserine" evidence="2">
    <location>
        <position position="199"/>
    </location>
</feature>
<feature type="modified residue" description="Asymmetric dimethylarginine; alternate" evidence="6">
    <location>
        <position position="206"/>
    </location>
</feature>
<feature type="modified residue" description="Dimethylated arginine; alternate" evidence="2">
    <location>
        <position position="206"/>
    </location>
</feature>
<feature type="modified residue" description="Omega-N-methylarginine; alternate" evidence="2">
    <location>
        <position position="206"/>
    </location>
</feature>
<feature type="modified residue" description="Asymmetric dimethylarginine; alternate" evidence="6">
    <location>
        <position position="218"/>
    </location>
</feature>
<feature type="modified residue" description="Omega-N-methylarginine; alternate" evidence="2">
    <location>
        <position position="218"/>
    </location>
</feature>
<feature type="modified residue" description="Asymmetric dimethylarginine; alternate" evidence="6">
    <location>
        <position position="225"/>
    </location>
</feature>
<feature type="modified residue" description="Dimethylated arginine; alternate" evidence="2">
    <location>
        <position position="225"/>
    </location>
</feature>
<feature type="modified residue" description="Omega-N-methylarginine; alternate" evidence="2">
    <location>
        <position position="225"/>
    </location>
</feature>
<feature type="modified residue" description="Asymmetric dimethylarginine; alternate" evidence="6">
    <location>
        <position position="232"/>
    </location>
</feature>
<feature type="modified residue" description="Omega-N-methylarginine; alternate" evidence="2">
    <location>
        <position position="232"/>
    </location>
</feature>
<feature type="modified residue" description="Omega-N-methylarginine" evidence="2">
    <location>
        <position position="284"/>
    </location>
</feature>
<feature type="modified residue" description="Phosphoserine" evidence="2">
    <location>
        <position position="285"/>
    </location>
</feature>
<feature type="modified residue" description="N6-acetyllysine; alternate" evidence="2">
    <location>
        <position position="298"/>
    </location>
</feature>
<feature type="modified residue" description="Omega-N-methylarginine" evidence="2">
    <location>
        <position position="300"/>
    </location>
</feature>
<feature type="modified residue" description="Phosphoserine" evidence="2">
    <location>
        <position position="309"/>
    </location>
</feature>
<feature type="modified residue" description="Phosphoserine; by MKNK2" evidence="2">
    <location>
        <position position="310"/>
    </location>
</feature>
<feature type="modified residue" description="Phosphoserine; by MKNK2" evidence="2">
    <location>
        <position position="311"/>
    </location>
</feature>
<feature type="modified residue" description="Phosphoserine; by MKNK2" evidence="2">
    <location>
        <position position="312"/>
    </location>
</feature>
<feature type="modified residue" description="Phosphoserine" evidence="2">
    <location>
        <position position="313"/>
    </location>
</feature>
<feature type="modified residue" description="Phosphoserine" evidence="2">
    <location>
        <position position="316"/>
    </location>
</feature>
<feature type="modified residue" description="Omega-N-methylarginine" evidence="2">
    <location>
        <position position="318"/>
    </location>
</feature>
<feature type="cross-link" description="Glycyl lysine isopeptide (Lys-Gly) (interchain with G-Cter in SUMO2); alternate" evidence="2">
    <location>
        <position position="3"/>
    </location>
</feature>
<feature type="cross-link" description="Glycyl lysine isopeptide (Lys-Gly) (interchain with G-Cter in SUMO2)" evidence="2">
    <location>
        <position position="8"/>
    </location>
</feature>
<feature type="cross-link" description="Glycyl lysine isopeptide (Lys-Gly) (interchain with G-Cter in SUMO2)" evidence="2">
    <location>
        <position position="78"/>
    </location>
</feature>
<feature type="cross-link" description="Glycyl lysine isopeptide (Lys-Gly) (interchain with G-Cter in SUMO)" evidence="1">
    <location>
        <position position="113"/>
    </location>
</feature>
<feature type="cross-link" description="Glycyl lysine isopeptide (Lys-Gly) (interchain with G-Cter in SUMO2)" evidence="2">
    <location>
        <position position="179"/>
    </location>
</feature>
<feature type="cross-link" description="Glycyl lysine isopeptide (Lys-Gly) (interchain with G-Cter in SUMO2)" evidence="2">
    <location>
        <position position="183"/>
    </location>
</feature>
<feature type="cross-link" description="Glycyl lysine isopeptide (Lys-Gly) (interchain with G-Cter in SUMO2); alternate" evidence="2">
    <location>
        <position position="298"/>
    </location>
</feature>
<feature type="sequence conflict" description="In Ref. 3; AA sequence." evidence="7" ref="3">
    <original>E</original>
    <variation>G</variation>
    <location>
        <position position="9"/>
    </location>
</feature>
<feature type="sequence conflict" description="In Ref. 4; AA sequence." evidence="7" ref="4">
    <original>D</original>
    <variation>E</variation>
    <location>
        <position position="27"/>
    </location>
</feature>
<evidence type="ECO:0000250" key="1"/>
<evidence type="ECO:0000250" key="2">
    <source>
        <dbReference type="UniProtKB" id="P09651"/>
    </source>
</evidence>
<evidence type="ECO:0000250" key="3">
    <source>
        <dbReference type="UniProtKB" id="P49312"/>
    </source>
</evidence>
<evidence type="ECO:0000255" key="4">
    <source>
        <dbReference type="PROSITE-ProRule" id="PRU00176"/>
    </source>
</evidence>
<evidence type="ECO:0000256" key="5">
    <source>
        <dbReference type="SAM" id="MobiDB-lite"/>
    </source>
</evidence>
<evidence type="ECO:0000269" key="6">
    <source>
    </source>
</evidence>
<evidence type="ECO:0000305" key="7"/>
<keyword id="KW-0007">Acetylation</keyword>
<keyword id="KW-0963">Cytoplasm</keyword>
<keyword id="KW-0903">Direct protein sequencing</keyword>
<keyword id="KW-1017">Isopeptide bond</keyword>
<keyword id="KW-0488">Methylation</keyword>
<keyword id="KW-0507">mRNA processing</keyword>
<keyword id="KW-0508">mRNA splicing</keyword>
<keyword id="KW-0509">mRNA transport</keyword>
<keyword id="KW-0539">Nucleus</keyword>
<keyword id="KW-0597">Phosphoprotein</keyword>
<keyword id="KW-1185">Reference proteome</keyword>
<keyword id="KW-0677">Repeat</keyword>
<keyword id="KW-0687">Ribonucleoprotein</keyword>
<keyword id="KW-0694">RNA-binding</keyword>
<keyword id="KW-0747">Spliceosome</keyword>
<keyword id="KW-0813">Transport</keyword>
<keyword id="KW-0832">Ubl conjugation</keyword>